<feature type="chain" id="PRO_0000309180" description="UPF0500 protein C1orf216 homolog">
    <location>
        <begin position="1"/>
        <end position="281"/>
    </location>
</feature>
<feature type="region of interest" description="Disordered" evidence="2">
    <location>
        <begin position="1"/>
        <end position="197"/>
    </location>
</feature>
<feature type="coiled-coil region" evidence="1">
    <location>
        <begin position="198"/>
        <end position="257"/>
    </location>
</feature>
<feature type="compositionally biased region" description="Polar residues" evidence="2">
    <location>
        <begin position="1"/>
        <end position="12"/>
    </location>
</feature>
<feature type="compositionally biased region" description="Basic and acidic residues" evidence="2">
    <location>
        <begin position="45"/>
        <end position="74"/>
    </location>
</feature>
<feature type="compositionally biased region" description="Low complexity" evidence="2">
    <location>
        <begin position="92"/>
        <end position="102"/>
    </location>
</feature>
<feature type="compositionally biased region" description="Low complexity" evidence="2">
    <location>
        <begin position="147"/>
        <end position="161"/>
    </location>
</feature>
<feature type="compositionally biased region" description="Low complexity" evidence="2">
    <location>
        <begin position="169"/>
        <end position="178"/>
    </location>
</feature>
<feature type="compositionally biased region" description="Acidic residues" evidence="2">
    <location>
        <begin position="179"/>
        <end position="190"/>
    </location>
</feature>
<organism>
    <name type="scientific">Xenopus laevis</name>
    <name type="common">African clawed frog</name>
    <dbReference type="NCBI Taxonomy" id="8355"/>
    <lineage>
        <taxon>Eukaryota</taxon>
        <taxon>Metazoa</taxon>
        <taxon>Chordata</taxon>
        <taxon>Craniata</taxon>
        <taxon>Vertebrata</taxon>
        <taxon>Euteleostomi</taxon>
        <taxon>Amphibia</taxon>
        <taxon>Batrachia</taxon>
        <taxon>Anura</taxon>
        <taxon>Pipoidea</taxon>
        <taxon>Pipidae</taxon>
        <taxon>Xenopodinae</taxon>
        <taxon>Xenopus</taxon>
        <taxon>Xenopus</taxon>
    </lineage>
</organism>
<accession>Q52KN3</accession>
<proteinExistence type="evidence at transcript level"/>
<protein>
    <recommendedName>
        <fullName>UPF0500 protein C1orf216 homolog</fullName>
    </recommendedName>
</protein>
<comment type="similarity">
    <text evidence="3">Belongs to the UPF0500 family.</text>
</comment>
<comment type="sequence caution" evidence="3">
    <conflict type="frameshift">
        <sequence resource="EMBL-CDS" id="AAH94267"/>
    </conflict>
</comment>
<evidence type="ECO:0000255" key="1"/>
<evidence type="ECO:0000256" key="2">
    <source>
        <dbReference type="SAM" id="MobiDB-lite"/>
    </source>
</evidence>
<evidence type="ECO:0000305" key="3"/>
<name>CA216_XENLA</name>
<keyword id="KW-0175">Coiled coil</keyword>
<keyword id="KW-1185">Reference proteome</keyword>
<reference key="1">
    <citation type="submission" date="2005-04" db="EMBL/GenBank/DDBJ databases">
        <authorList>
            <consortium name="NIH - Xenopus Gene Collection (XGC) project"/>
        </authorList>
    </citation>
    <scope>NUCLEOTIDE SEQUENCE [LARGE SCALE MRNA]</scope>
    <source>
        <tissue>Eye</tissue>
    </source>
</reference>
<sequence>MFTIQKPDTVSHLSHFHESKSLGSLPFPSDKERKQDTNFNILEETYDKNENWSQDKKGGEEGENKSKSEDEHSSLDNNRSQLKNRPIGQLKSTGSEGISLSSSEEEVRSPPEGAEIMQLEGDTPANDTANGFEKWAGSPLEDNGYASSSLSIDSPDSVSASTWQETTLPAPTTTPQENPETEDSDVESSSDSDSISVTLSEAFQSLQDKEKLKEREKEKHHAQLTMYRRLALLRWIRALQQKVRDQQNRLQESFDTILDNRKEMLRHMQHGYNKTPTKEAV</sequence>
<dbReference type="EMBL" id="BC094267">
    <property type="protein sequence ID" value="AAH94267.1"/>
    <property type="status" value="ALT_FRAME"/>
    <property type="molecule type" value="mRNA"/>
</dbReference>
<dbReference type="RefSeq" id="NP_001090024.1">
    <property type="nucleotide sequence ID" value="NM_001096555.1"/>
</dbReference>
<dbReference type="SMR" id="Q52KN3"/>
<dbReference type="DNASU" id="735096"/>
<dbReference type="GeneID" id="735096"/>
<dbReference type="KEGG" id="xla:735096"/>
<dbReference type="AGR" id="Xenbase:XB-GENE-1006876"/>
<dbReference type="CTD" id="735096"/>
<dbReference type="Xenbase" id="XB-GENE-1006876">
    <property type="gene designation" value="c2h1orf216.S"/>
</dbReference>
<dbReference type="OrthoDB" id="9900901at2759"/>
<dbReference type="Proteomes" id="UP000186698">
    <property type="component" value="Chromosome 2S"/>
</dbReference>
<dbReference type="Bgee" id="735096">
    <property type="expression patterns" value="Expressed in brain and 6 other cell types or tissues"/>
</dbReference>
<dbReference type="InterPro" id="IPR027812">
    <property type="entry name" value="DUF4653"/>
</dbReference>
<dbReference type="PANTHER" id="PTHR35673">
    <property type="entry name" value="UPF0500 PROTEIN C1ORF216"/>
    <property type="match status" value="1"/>
</dbReference>
<dbReference type="PANTHER" id="PTHR35673:SF1">
    <property type="entry name" value="UPF0500 PROTEIN C1ORF216"/>
    <property type="match status" value="1"/>
</dbReference>
<dbReference type="Pfam" id="PF15546">
    <property type="entry name" value="DUF4653"/>
    <property type="match status" value="1"/>
</dbReference>